<sequence>DPQFVLAQNVGTHHDLLDICLRRATVQGAQHVFQHVVPQEGKPVTNQKSSGRCWIFSCLNVMRLPFMKKLNIEEFEFSQSYVFFWDKVERCYFFLNAFVDTAQKKEPEDGRLVQYLLMNPTNDGGQWDMLVNIIEKYGVVPKKCFPESHTTEASRRMNDILNHKMREFCIRLRNMVHSGATKAEISATEDTMMEEIFRVVCICLGNPPETFTWEYRDKDKNYQKIGPITPLEFYRQHVKPLFNMEDKICFVNDPRPQHKYNRLYTVDYLSNMVGGRK</sequence>
<comment type="function">
    <text>The normal physiological role of BLM hydrolase is unknown, but it catalyzes the inactivation of the antitumor drug BLM (a glycopeptide) by hydrolyzing the carboxamide bond of its B-aminoalaninamide moiety thus protecting normal and malignant cells from BLM toxicity.</text>
</comment>
<comment type="catalytic activity">
    <reaction>
        <text>Inactivates bleomycin B2 (a cytotoxic glycometallopeptide) by hydrolysis of a carboxyamide bond of beta-aminoalanine, but also shows general aminopeptidase activity. The specificity varies somewhat with source, but amino acid arylamides of Met, Leu and Ala are preferred.</text>
        <dbReference type="EC" id="3.4.22.40"/>
    </reaction>
</comment>
<comment type="activity regulation">
    <text>Strongly inhibited by leupeptin, puromycin, NEM, and divalent cations.</text>
</comment>
<comment type="subunit">
    <text evidence="1">Homohexamer (By similarity). Interacts with NUDT12 (via ANK repeats) (By similarity).</text>
</comment>
<comment type="subcellular location">
    <subcellularLocation>
        <location evidence="1">Cytoplasm</location>
    </subcellularLocation>
    <subcellularLocation>
        <location evidence="1">Cytoplasmic granule</location>
    </subcellularLocation>
    <text evidence="1">Co-localizes with NUDT12 in the cytoplasmic granules.</text>
</comment>
<comment type="similarity">
    <text evidence="2 3 4">Belongs to the peptidase C1 family.</text>
</comment>
<proteinExistence type="evidence at protein level"/>
<reference key="1">
    <citation type="journal article" date="1989" name="Biochemistry">
        <title>Bleomycin hydrolase: molecular cloning, sequencing, and biochemical studies reveal membership in the cysteine proteinase family.</title>
        <authorList>
            <person name="Sebti S.M."/>
            <person name="Mignano J.E."/>
            <person name="Jani J.P."/>
            <person name="Srimatkandada S."/>
            <person name="Lazo J.S."/>
        </authorList>
    </citation>
    <scope>NUCLEOTIDE SEQUENCE [MRNA]</scope>
    <scope>PROTEIN SEQUENCE OF 24-48</scope>
    <source>
        <tissue>Lung</tissue>
    </source>
</reference>
<evidence type="ECO:0000250" key="1">
    <source>
        <dbReference type="UniProtKB" id="Q13867"/>
    </source>
</evidence>
<evidence type="ECO:0000255" key="2">
    <source>
        <dbReference type="PROSITE-ProRule" id="PRU10088"/>
    </source>
</evidence>
<evidence type="ECO:0000255" key="3">
    <source>
        <dbReference type="PROSITE-ProRule" id="PRU10089"/>
    </source>
</evidence>
<evidence type="ECO:0000255" key="4">
    <source>
        <dbReference type="PROSITE-ProRule" id="PRU10090"/>
    </source>
</evidence>
<name>BLMH_RABIT</name>
<protein>
    <recommendedName>
        <fullName>Bleomycin hydrolase</fullName>
        <shortName>BH</shortName>
        <shortName>BLM hydrolase</shortName>
        <shortName>BMH</shortName>
        <ecNumber>3.4.22.40</ecNumber>
    </recommendedName>
</protein>
<organism>
    <name type="scientific">Oryctolagus cuniculus</name>
    <name type="common">Rabbit</name>
    <dbReference type="NCBI Taxonomy" id="9986"/>
    <lineage>
        <taxon>Eukaryota</taxon>
        <taxon>Metazoa</taxon>
        <taxon>Chordata</taxon>
        <taxon>Craniata</taxon>
        <taxon>Vertebrata</taxon>
        <taxon>Euteleostomi</taxon>
        <taxon>Mammalia</taxon>
        <taxon>Eutheria</taxon>
        <taxon>Euarchontoglires</taxon>
        <taxon>Glires</taxon>
        <taxon>Lagomorpha</taxon>
        <taxon>Leporidae</taxon>
        <taxon>Oryctolagus</taxon>
    </lineage>
</organism>
<keyword id="KW-0963">Cytoplasm</keyword>
<keyword id="KW-0903">Direct protein sequencing</keyword>
<keyword id="KW-0378">Hydrolase</keyword>
<keyword id="KW-0645">Protease</keyword>
<keyword id="KW-1185">Reference proteome</keyword>
<keyword id="KW-0788">Thiol protease</keyword>
<dbReference type="EC" id="3.4.22.40"/>
<dbReference type="EMBL" id="J02866">
    <property type="protein sequence ID" value="AAA31171.1"/>
    <property type="molecule type" value="mRNA"/>
</dbReference>
<dbReference type="PIR" id="A32972">
    <property type="entry name" value="A32972"/>
</dbReference>
<dbReference type="SMR" id="P13019"/>
<dbReference type="STRING" id="9986.ENSOCUP00000035232"/>
<dbReference type="MEROPS" id="C01.084"/>
<dbReference type="PaxDb" id="9986-ENSOCUP00000003162"/>
<dbReference type="eggNOG" id="KOG4128">
    <property type="taxonomic scope" value="Eukaryota"/>
</dbReference>
<dbReference type="InParanoid" id="P13019"/>
<dbReference type="Proteomes" id="UP000001811">
    <property type="component" value="Unplaced"/>
</dbReference>
<dbReference type="GO" id="GO:0005737">
    <property type="term" value="C:cytoplasm"/>
    <property type="evidence" value="ECO:0000250"/>
    <property type="project" value="UniProtKB"/>
</dbReference>
<dbReference type="GO" id="GO:0070005">
    <property type="term" value="F:cysteine-type aminopeptidase activity"/>
    <property type="evidence" value="ECO:0007669"/>
    <property type="project" value="InterPro"/>
</dbReference>
<dbReference type="GO" id="GO:0004197">
    <property type="term" value="F:cysteine-type endopeptidase activity"/>
    <property type="evidence" value="ECO:0007669"/>
    <property type="project" value="UniProtKB-EC"/>
</dbReference>
<dbReference type="GO" id="GO:0043418">
    <property type="term" value="P:homocysteine catabolic process"/>
    <property type="evidence" value="ECO:0007669"/>
    <property type="project" value="TreeGrafter"/>
</dbReference>
<dbReference type="GO" id="GO:0006508">
    <property type="term" value="P:proteolysis"/>
    <property type="evidence" value="ECO:0007669"/>
    <property type="project" value="UniProtKB-KW"/>
</dbReference>
<dbReference type="GO" id="GO:0009636">
    <property type="term" value="P:response to toxic substance"/>
    <property type="evidence" value="ECO:0007669"/>
    <property type="project" value="TreeGrafter"/>
</dbReference>
<dbReference type="FunFam" id="3.90.70.10:FF:000545">
    <property type="entry name" value="Uncharacterized protein"/>
    <property type="match status" value="1"/>
</dbReference>
<dbReference type="Gene3D" id="3.90.70.10">
    <property type="entry name" value="Cysteine proteinases"/>
    <property type="match status" value="1"/>
</dbReference>
<dbReference type="InterPro" id="IPR038765">
    <property type="entry name" value="Papain-like_cys_pep_sf"/>
</dbReference>
<dbReference type="InterPro" id="IPR000169">
    <property type="entry name" value="Pept_cys_AS"/>
</dbReference>
<dbReference type="InterPro" id="IPR004134">
    <property type="entry name" value="Peptidase_C1B"/>
</dbReference>
<dbReference type="PANTHER" id="PTHR10363">
    <property type="entry name" value="BLEOMYCIN HYDROLASE"/>
    <property type="match status" value="1"/>
</dbReference>
<dbReference type="PANTHER" id="PTHR10363:SF2">
    <property type="entry name" value="BLEOMYCIN HYDROLASE"/>
    <property type="match status" value="1"/>
</dbReference>
<dbReference type="Pfam" id="PF03051">
    <property type="entry name" value="Peptidase_C1_2"/>
    <property type="match status" value="1"/>
</dbReference>
<dbReference type="SUPFAM" id="SSF54001">
    <property type="entry name" value="Cysteine proteinases"/>
    <property type="match status" value="1"/>
</dbReference>
<dbReference type="PROSITE" id="PS00139">
    <property type="entry name" value="THIOL_PROTEASE_CYS"/>
    <property type="match status" value="1"/>
</dbReference>
<accession>P13019</accession>
<feature type="chain" id="PRO_0000050552" description="Bleomycin hydrolase">
    <location>
        <begin position="1" status="less than"/>
        <end position="277" status="greater than"/>
    </location>
</feature>
<feature type="active site" evidence="2 3 4">
    <location>
        <position position="53"/>
    </location>
</feature>
<feature type="non-terminal residue">
    <location>
        <position position="1"/>
    </location>
</feature>
<feature type="non-terminal residue">
    <location>
        <position position="277"/>
    </location>
</feature>
<gene>
    <name type="primary">BLMH</name>
</gene>